<feature type="chain" id="PRO_0000328830" description="DNA excision repair protein ERCC-6-like">
    <location>
        <begin position="1"/>
        <end position="1242"/>
    </location>
</feature>
<feature type="repeat" description="TPR 1">
    <location>
        <begin position="21"/>
        <end position="54"/>
    </location>
</feature>
<feature type="domain" description="Helicase ATP-binding" evidence="3">
    <location>
        <begin position="109"/>
        <end position="277"/>
    </location>
</feature>
<feature type="domain" description="Helicase C-terminal" evidence="4">
    <location>
        <begin position="466"/>
        <end position="626"/>
    </location>
</feature>
<feature type="repeat" description="TPR 2">
    <location>
        <begin position="1192"/>
        <end position="1225"/>
    </location>
</feature>
<feature type="region of interest" description="Disordered" evidence="5">
    <location>
        <begin position="1103"/>
        <end position="1181"/>
    </location>
</feature>
<feature type="short sequence motif" description="DEAH box">
    <location>
        <begin position="228"/>
        <end position="231"/>
    </location>
</feature>
<feature type="compositionally biased region" description="Basic and acidic residues" evidence="5">
    <location>
        <begin position="1105"/>
        <end position="1121"/>
    </location>
</feature>
<feature type="compositionally biased region" description="Basic and acidic residues" evidence="5">
    <location>
        <begin position="1130"/>
        <end position="1140"/>
    </location>
</feature>
<feature type="compositionally biased region" description="Polar residues" evidence="5">
    <location>
        <begin position="1141"/>
        <end position="1156"/>
    </location>
</feature>
<feature type="binding site" evidence="3">
    <location>
        <begin position="122"/>
        <end position="129"/>
    </location>
    <ligand>
        <name>ATP</name>
        <dbReference type="ChEBI" id="CHEBI:30616"/>
    </ligand>
</feature>
<feature type="modified residue" description="Phosphoserine" evidence="1">
    <location>
        <position position="14"/>
    </location>
</feature>
<feature type="modified residue" description="Phosphoserine" evidence="1">
    <location>
        <position position="755"/>
    </location>
</feature>
<feature type="modified residue" description="Phosphoserine" evidence="1">
    <location>
        <position position="773"/>
    </location>
</feature>
<feature type="modified residue" description="Phosphothreonine" evidence="1">
    <location>
        <position position="815"/>
    </location>
</feature>
<feature type="modified residue" description="Phosphoserine" evidence="1">
    <location>
        <position position="963"/>
    </location>
</feature>
<feature type="modified residue" description="Phosphoserine" evidence="1">
    <location>
        <position position="989"/>
    </location>
</feature>
<feature type="modified residue" description="Phosphoserine" evidence="2">
    <location>
        <position position="998"/>
    </location>
</feature>
<feature type="modified residue" description="Phosphoserine" evidence="1">
    <location>
        <position position="1021"/>
    </location>
</feature>
<feature type="modified residue" description="Phosphothreonine" evidence="1">
    <location>
        <position position="1055"/>
    </location>
</feature>
<feature type="modified residue" description="Phosphoserine" evidence="1">
    <location>
        <position position="1061"/>
    </location>
</feature>
<feature type="modified residue" description="Phosphoserine" evidence="1">
    <location>
        <position position="1090"/>
    </location>
</feature>
<feature type="modified residue" description="Phosphoserine" evidence="2">
    <location>
        <position position="1110"/>
    </location>
</feature>
<feature type="modified residue" description="Phosphoserine" evidence="1">
    <location>
        <position position="1173"/>
    </location>
</feature>
<feature type="modified residue" description="Phosphoserine" evidence="1">
    <location>
        <position position="1180"/>
    </location>
</feature>
<accession>A6QQR4</accession>
<accession>Q0V8L7</accession>
<comment type="function">
    <text evidence="1">DNA helicase that acts as a tension sensor that associates with catenated DNA which is stretched under tension until it is resolved during anaphase. Functions as ATP-dependent DNA translocase. Can promote Holliday junction branch migration (in vitro).</text>
</comment>
<comment type="catalytic activity">
    <reaction evidence="1">
        <text>ATP + H2O = ADP + phosphate + H(+)</text>
        <dbReference type="Rhea" id="RHEA:13065"/>
        <dbReference type="ChEBI" id="CHEBI:15377"/>
        <dbReference type="ChEBI" id="CHEBI:15378"/>
        <dbReference type="ChEBI" id="CHEBI:30616"/>
        <dbReference type="ChEBI" id="CHEBI:43474"/>
        <dbReference type="ChEBI" id="CHEBI:456216"/>
        <dbReference type="EC" id="3.6.4.12"/>
    </reaction>
</comment>
<comment type="subunit">
    <text evidence="1">Interacts with PLK1, which phosphorylates it. Both proteins are mutually dependent on each other for correct subcellular localization. Interacts (via N-terminal TPR repeat) with BEND3 (via BEN domains 1 and 3); the interaction is direct.</text>
</comment>
<comment type="subcellular location">
    <subcellularLocation>
        <location evidence="1">Chromosome</location>
        <location evidence="1">Centromere</location>
    </subcellularLocation>
    <subcellularLocation>
        <location evidence="1">Chromosome</location>
        <location evidence="1">Centromere</location>
        <location evidence="1">Kinetochore</location>
    </subcellularLocation>
    <subcellularLocation>
        <location evidence="1">Chromosome</location>
    </subcellularLocation>
    <text evidence="1">Localizes to kinetochores, inner centromeres and thin threads connecting separating chromosomes even during anaphase. In prometaphase cells, it mostly concentrates in between kinetochores. In metaphase, it localizes to numerous thin threads that stretch between sister kinetochores of the aligned chromosomes and are composed of catenated centromeric DNA. Evolution from inner centromeres to thin threads takes place in response to tension. Resolution of thin threads requires topoisomerase 2-alpha (TOP2A) after anaphase onset.</text>
</comment>
<comment type="PTM">
    <text evidence="1">Phosphorylation by PLK1 prevents the association with chromosome arms and restricts its localization to the kinetochore-centromere region.</text>
</comment>
<comment type="similarity">
    <text evidence="6">Belongs to the SNF2/RAD54 helicase family.</text>
</comment>
<evidence type="ECO:0000250" key="1">
    <source>
        <dbReference type="UniProtKB" id="Q2NKX8"/>
    </source>
</evidence>
<evidence type="ECO:0000250" key="2">
    <source>
        <dbReference type="UniProtKB" id="Q8BHK9"/>
    </source>
</evidence>
<evidence type="ECO:0000255" key="3">
    <source>
        <dbReference type="PROSITE-ProRule" id="PRU00541"/>
    </source>
</evidence>
<evidence type="ECO:0000255" key="4">
    <source>
        <dbReference type="PROSITE-ProRule" id="PRU00542"/>
    </source>
</evidence>
<evidence type="ECO:0000256" key="5">
    <source>
        <dbReference type="SAM" id="MobiDB-lite"/>
    </source>
</evidence>
<evidence type="ECO:0000305" key="6"/>
<protein>
    <recommendedName>
        <fullName>DNA excision repair protein ERCC-6-like</fullName>
        <ecNumber evidence="1">3.6.4.12</ecNumber>
    </recommendedName>
    <alternativeName>
        <fullName>ATP-dependent helicase ERCC6-like</fullName>
    </alternativeName>
</protein>
<organism>
    <name type="scientific">Bos taurus</name>
    <name type="common">Bovine</name>
    <dbReference type="NCBI Taxonomy" id="9913"/>
    <lineage>
        <taxon>Eukaryota</taxon>
        <taxon>Metazoa</taxon>
        <taxon>Chordata</taxon>
        <taxon>Craniata</taxon>
        <taxon>Vertebrata</taxon>
        <taxon>Euteleostomi</taxon>
        <taxon>Mammalia</taxon>
        <taxon>Eutheria</taxon>
        <taxon>Laurasiatheria</taxon>
        <taxon>Artiodactyla</taxon>
        <taxon>Ruminantia</taxon>
        <taxon>Pecora</taxon>
        <taxon>Bovidae</taxon>
        <taxon>Bovinae</taxon>
        <taxon>Bos</taxon>
    </lineage>
</organism>
<keyword id="KW-0067">ATP-binding</keyword>
<keyword id="KW-0131">Cell cycle</keyword>
<keyword id="KW-0132">Cell division</keyword>
<keyword id="KW-0137">Centromere</keyword>
<keyword id="KW-0158">Chromosome</keyword>
<keyword id="KW-0238">DNA-binding</keyword>
<keyword id="KW-0347">Helicase</keyword>
<keyword id="KW-0378">Hydrolase</keyword>
<keyword id="KW-0995">Kinetochore</keyword>
<keyword id="KW-0498">Mitosis</keyword>
<keyword id="KW-0547">Nucleotide-binding</keyword>
<keyword id="KW-0597">Phosphoprotein</keyword>
<keyword id="KW-1185">Reference proteome</keyword>
<keyword id="KW-0677">Repeat</keyword>
<keyword id="KW-0802">TPR repeat</keyword>
<reference key="1">
    <citation type="submission" date="2007-07" db="EMBL/GenBank/DDBJ databases">
        <authorList>
            <consortium name="NIH - Mammalian Gene Collection (MGC) project"/>
        </authorList>
    </citation>
    <scope>NUCLEOTIDE SEQUENCE [LARGE SCALE MRNA]</scope>
    <source>
        <strain>Hereford</strain>
        <tissue>Thymus</tissue>
    </source>
</reference>
<reference key="2">
    <citation type="journal article" date="2005" name="BMC Genomics">
        <title>Characterization of 954 bovine full-CDS cDNA sequences.</title>
        <authorList>
            <person name="Harhay G.P."/>
            <person name="Sonstegard T.S."/>
            <person name="Keele J.W."/>
            <person name="Heaton M.P."/>
            <person name="Clawson M.L."/>
            <person name="Snelling W.M."/>
            <person name="Wiedmann R.T."/>
            <person name="Van Tassell C.P."/>
            <person name="Smith T.P.L."/>
        </authorList>
    </citation>
    <scope>NUCLEOTIDE SEQUENCE [LARGE SCALE MRNA] OF 705-1242</scope>
</reference>
<dbReference type="EC" id="3.6.4.12" evidence="1"/>
<dbReference type="EMBL" id="BC149963">
    <property type="protein sequence ID" value="AAI49964.1"/>
    <property type="molecule type" value="mRNA"/>
</dbReference>
<dbReference type="EMBL" id="BT026201">
    <property type="protein sequence ID" value="ABG67040.1"/>
    <property type="molecule type" value="mRNA"/>
</dbReference>
<dbReference type="RefSeq" id="NP_001096000.1">
    <property type="nucleotide sequence ID" value="NM_001102530.2"/>
</dbReference>
<dbReference type="SMR" id="A6QQR4"/>
<dbReference type="FunCoup" id="A6QQR4">
    <property type="interactions" value="484"/>
</dbReference>
<dbReference type="STRING" id="9913.ENSBTAP00000007362"/>
<dbReference type="PaxDb" id="9913-ENSBTAP00000007362"/>
<dbReference type="Ensembl" id="ENSBTAT00000007362.7">
    <property type="protein sequence ID" value="ENSBTAP00000007362.5"/>
    <property type="gene ID" value="ENSBTAG00000005607.7"/>
</dbReference>
<dbReference type="GeneID" id="782916"/>
<dbReference type="KEGG" id="bta:782916"/>
<dbReference type="CTD" id="54821"/>
<dbReference type="VEuPathDB" id="HostDB:ENSBTAG00000005607"/>
<dbReference type="VGNC" id="VGNC:28573">
    <property type="gene designation" value="ERCC6L"/>
</dbReference>
<dbReference type="eggNOG" id="KOG0387">
    <property type="taxonomic scope" value="Eukaryota"/>
</dbReference>
<dbReference type="GeneTree" id="ENSGT00940000156837"/>
<dbReference type="HOGENOM" id="CLU_004666_0_0_1"/>
<dbReference type="InParanoid" id="A6QQR4"/>
<dbReference type="OMA" id="FTIEDFQ"/>
<dbReference type="OrthoDB" id="413460at2759"/>
<dbReference type="TreeFam" id="TF332843"/>
<dbReference type="Reactome" id="R-BTA-141444">
    <property type="pathway name" value="Amplification of signal from unattached kinetochores via a MAD2 inhibitory signal"/>
</dbReference>
<dbReference type="Reactome" id="R-BTA-2467813">
    <property type="pathway name" value="Separation of Sister Chromatids"/>
</dbReference>
<dbReference type="Reactome" id="R-BTA-2500257">
    <property type="pathway name" value="Resolution of Sister Chromatid Cohesion"/>
</dbReference>
<dbReference type="Reactome" id="R-BTA-5663220">
    <property type="pathway name" value="RHO GTPases Activate Formins"/>
</dbReference>
<dbReference type="Reactome" id="R-BTA-68877">
    <property type="pathway name" value="Mitotic Prometaphase"/>
</dbReference>
<dbReference type="Reactome" id="R-BTA-9648025">
    <property type="pathway name" value="EML4 and NUDC in mitotic spindle formation"/>
</dbReference>
<dbReference type="Proteomes" id="UP000009136">
    <property type="component" value="Chromosome X"/>
</dbReference>
<dbReference type="Bgee" id="ENSBTAG00000005607">
    <property type="expression patterns" value="Expressed in conceptus and 76 other cell types or tissues"/>
</dbReference>
<dbReference type="GO" id="GO:0000776">
    <property type="term" value="C:kinetochore"/>
    <property type="evidence" value="ECO:0007669"/>
    <property type="project" value="UniProtKB-KW"/>
</dbReference>
<dbReference type="GO" id="GO:0005524">
    <property type="term" value="F:ATP binding"/>
    <property type="evidence" value="ECO:0007669"/>
    <property type="project" value="UniProtKB-KW"/>
</dbReference>
<dbReference type="GO" id="GO:0016887">
    <property type="term" value="F:ATP hydrolysis activity"/>
    <property type="evidence" value="ECO:0007669"/>
    <property type="project" value="RHEA"/>
</dbReference>
<dbReference type="GO" id="GO:0003677">
    <property type="term" value="F:DNA binding"/>
    <property type="evidence" value="ECO:0007669"/>
    <property type="project" value="UniProtKB-KW"/>
</dbReference>
<dbReference type="GO" id="GO:0015616">
    <property type="term" value="F:DNA translocase activity"/>
    <property type="evidence" value="ECO:0000250"/>
    <property type="project" value="UniProtKB"/>
</dbReference>
<dbReference type="GO" id="GO:0004386">
    <property type="term" value="F:helicase activity"/>
    <property type="evidence" value="ECO:0007669"/>
    <property type="project" value="UniProtKB-KW"/>
</dbReference>
<dbReference type="GO" id="GO:0051301">
    <property type="term" value="P:cell division"/>
    <property type="evidence" value="ECO:0007669"/>
    <property type="project" value="UniProtKB-KW"/>
</dbReference>
<dbReference type="GO" id="GO:0006281">
    <property type="term" value="P:DNA repair"/>
    <property type="evidence" value="ECO:0000318"/>
    <property type="project" value="GO_Central"/>
</dbReference>
<dbReference type="CDD" id="cd18001">
    <property type="entry name" value="DEXHc_ERCC6L"/>
    <property type="match status" value="1"/>
</dbReference>
<dbReference type="CDD" id="cd18793">
    <property type="entry name" value="SF2_C_SNF"/>
    <property type="match status" value="1"/>
</dbReference>
<dbReference type="FunFam" id="3.40.50.300:FF:001004">
    <property type="entry name" value="DNA excision repair protein ERCC-6-like isoform X1"/>
    <property type="match status" value="1"/>
</dbReference>
<dbReference type="FunFam" id="3.40.50.10810:FF:000029">
    <property type="entry name" value="ERCC excision repair 6-like, spindle assembly checkpoint helicase"/>
    <property type="match status" value="1"/>
</dbReference>
<dbReference type="Gene3D" id="3.40.50.300">
    <property type="entry name" value="P-loop containing nucleotide triphosphate hydrolases"/>
    <property type="match status" value="1"/>
</dbReference>
<dbReference type="Gene3D" id="3.40.50.10810">
    <property type="entry name" value="Tandem AAA-ATPase domain"/>
    <property type="match status" value="1"/>
</dbReference>
<dbReference type="InterPro" id="IPR014001">
    <property type="entry name" value="Helicase_ATP-bd"/>
</dbReference>
<dbReference type="InterPro" id="IPR001650">
    <property type="entry name" value="Helicase_C-like"/>
</dbReference>
<dbReference type="InterPro" id="IPR027417">
    <property type="entry name" value="P-loop_NTPase"/>
</dbReference>
<dbReference type="InterPro" id="IPR038718">
    <property type="entry name" value="SNF2-like_sf"/>
</dbReference>
<dbReference type="InterPro" id="IPR049730">
    <property type="entry name" value="SNF2/RAD54-like_C"/>
</dbReference>
<dbReference type="InterPro" id="IPR000330">
    <property type="entry name" value="SNF2_N"/>
</dbReference>
<dbReference type="InterPro" id="IPR050496">
    <property type="entry name" value="SNF2_RAD54_helicase_repair"/>
</dbReference>
<dbReference type="PANTHER" id="PTHR45629:SF7">
    <property type="entry name" value="DNA EXCISION REPAIR PROTEIN ERCC-6-RELATED"/>
    <property type="match status" value="1"/>
</dbReference>
<dbReference type="PANTHER" id="PTHR45629">
    <property type="entry name" value="SNF2/RAD54 FAMILY MEMBER"/>
    <property type="match status" value="1"/>
</dbReference>
<dbReference type="Pfam" id="PF00271">
    <property type="entry name" value="Helicase_C"/>
    <property type="match status" value="1"/>
</dbReference>
<dbReference type="Pfam" id="PF00176">
    <property type="entry name" value="SNF2-rel_dom"/>
    <property type="match status" value="1"/>
</dbReference>
<dbReference type="SMART" id="SM00487">
    <property type="entry name" value="DEXDc"/>
    <property type="match status" value="1"/>
</dbReference>
<dbReference type="SMART" id="SM00490">
    <property type="entry name" value="HELICc"/>
    <property type="match status" value="1"/>
</dbReference>
<dbReference type="SUPFAM" id="SSF52540">
    <property type="entry name" value="P-loop containing nucleoside triphosphate hydrolases"/>
    <property type="match status" value="2"/>
</dbReference>
<dbReference type="PROSITE" id="PS51192">
    <property type="entry name" value="HELICASE_ATP_BIND_1"/>
    <property type="match status" value="1"/>
</dbReference>
<dbReference type="PROSITE" id="PS51194">
    <property type="entry name" value="HELICASE_CTER"/>
    <property type="match status" value="1"/>
</dbReference>
<gene>
    <name type="primary">ERCC6L</name>
</gene>
<name>ERC6L_BOVIN</name>
<proteinExistence type="evidence at transcript level"/>
<sequence>MEVSRGFAEAGALSPEQAASYLRYVKEAKEATKNGDLEQALKLFNLAKDIFPNEKVMSRIQKIQEALEELAEHGDDEFIDVCNSGLLLYQELHNQLYEYQKEGIAFLYSLYRDGRRGGILADDMGLGKTVQIIAFLSGMFDASLVNHVLLIMPTSLISTWLREFVKWTPGMRVKTFHGPSKDERTRNLCRIQQRNGVIITTYQMLINNWQQLSSLNGQEFLWDYVILDEAHKIKSSSTKSAICARAIPASNRILLTGTPIQNNLQELWSLFDFACQGSLLGTLRTFKMEYENPITRAREKDATPGEKALGFKISENLMAIIKPYFLRRTKEEVQKKKSSNPEVQLSEKSPDVGAICEMPSLSRKNDLIIWIRLVPLQEEIYRKFVSLDHIKELLMETRSPLAELGVLKKLCDHPRLLSARACGLLNLGAAKFSVQDEIEGEDSSDVDHIDQISDDTLMEESGKMLFLMDLLKKLRDEGHQTLVFSQSRRILNIIERLLKNRHFKILRIDGTITHLVEREKRISLFQQNKDYSVFLLTTQVGGVGLTLTAASRVVIFDPSWNPATDAQAVDRVYRIGQKENVVVYRLITCGTVEEKIYRRQVFKDSLIRQTTGDKKNPFRYFSKQELRELFTIEDFQNSATQLQLQSLHAAQRRSDKNLDEHIAFLHSLRIAGISDHDLMYTRDLSVKEELDVIEDSHYIQQRVQKAQFLVESESQNTELLMERQKMGNEGIWLREPVYQTKKKRPKVNKPQPQPSSHLPVYHTQEEISSLMASIIIDDLPKEDEKDLSRIKLNDTIPQDGRHPCVITLNDDFVTTLPKGCGDVEEIFPDSLSGMALQKEASQEGFMQESEQESPLASFNYLPSKSARVDLGPNLDQLEDDEVLHHCNPSPANPKTKEYQRPESNVSVIKIADDDLTAAHSALQDAQANEAKLEEEPLASSGQYACDFNLFLEDSADNGQNLSSQFLEHVEKENSLCGSAANSRAESVHSKACLSVDLSEEDDEPEEVVNVKIRRKARRIDSDNEDEHTFKDTSSTNPFNTSPFPFLSVKQFDASTPKNDISLPERFFSPKISDSINKSVNSRRSLASRRSLINVVLDHVEDMEERLDNSSEAKVVEDHLEEGAEESGDEAPEHTKEDPSRETLSSENKSSQLSTSKPGALAQETSPGDPEPLSDGQLVDSPQDEAMEAVNDYDTLVLHGKELKECGKIQEALDCLVKALDIKSSDPEVMLMTLSLYKQLNKT</sequence>